<reference key="1">
    <citation type="journal article" date="1994" name="Toxicon">
        <title>Primary sequence determination of the most basic myonecrotic phospholipase A2 from the venom of Vipera russelli.</title>
        <authorList>
            <person name="Gowda T.V."/>
            <person name="Schmidt J."/>
            <person name="Middlebrook J.L."/>
        </authorList>
    </citation>
    <scope>PROTEIN SEQUENCE</scope>
    <scope>SUBUNIT</scope>
    <scope>SUBCELLULAR LOCATION</scope>
    <source>
        <tissue>Venom</tissue>
    </source>
</reference>
<reference key="2">
    <citation type="journal article" date="1996" name="Toxicon">
        <title>Two types of Russell's viper revealed by variation in phospholipases A2 from venom of the subspecies.</title>
        <authorList>
            <person name="Tsai I.-H."/>
            <person name="Lu P.-J."/>
            <person name="Su J.-C."/>
        </authorList>
    </citation>
    <scope>PROTEIN SEQUENCE OF 1-50</scope>
    <scope>FUNCTION</scope>
    <scope>TOXIC DOSE</scope>
    <scope>SUBCELLULAR LOCATION</scope>
    <source>
        <tissue>Venom</tissue>
    </source>
</reference>
<reference key="3">
    <citation type="journal article" date="2010" name="Biomed. Res.">
        <title>Molecular diversity in venom proteins of the Russell's viper (Daboia russellii russellii) and the Indian cobra (Naja naja) in Sri Lanka.</title>
        <authorList>
            <person name="Suzuki M."/>
            <person name="Itoh T."/>
            <person name="Bandaranayake B.M.A.I.K."/>
            <person name="Ranasinghe J.G."/>
            <person name="Athauda S.B."/>
            <person name="Moriyama A."/>
        </authorList>
    </citation>
    <scope>PROTEIN SEQUENCE OF 1-21</scope>
    <scope>SUBCELLULAR LOCATION</scope>
    <source>
        <tissue>Venom</tissue>
    </source>
</reference>
<reference key="4">
    <citation type="journal article" date="1989" name="Toxicon">
        <title>Purification and characterization of a major phospholipase A2 from Russell's viper (Vipera russelli) venom.</title>
        <authorList>
            <person name="Kasturi S."/>
            <person name="Gowda T.V."/>
        </authorList>
    </citation>
    <scope>CHARACTERIZATION</scope>
    <scope>TOXIC DOSE</scope>
    <source>
        <tissue>Venom</tissue>
    </source>
</reference>
<reference key="5">
    <citation type="journal article" date="1990" name="Immunology">
        <title>Antibodies to a phospholipase A2 from Vipera russelli selectively neutralize venom neurotoxicity.</title>
        <authorList>
            <person name="Kasturi S."/>
            <person name="Rudrammaji L.M."/>
            <person name="Gowda T.V."/>
        </authorList>
    </citation>
    <scope>FUNCTION</scope>
</reference>
<reference key="6">
    <citation type="journal article" date="2007" name="BMC Struct. Biol.">
        <title>Characterization of a human coagulation factor Xa-binding site on Viperidae snake venom phospholipases A2 by affinity binding studies and molecular bioinformatics.</title>
        <authorList>
            <person name="Faure G."/>
            <person name="Gowda V.T."/>
            <person name="Maroun R.C."/>
        </authorList>
    </citation>
    <scope>FUNCTION AS AN ANTICOAGULANT</scope>
</reference>
<reference key="7">
    <citation type="journal article" date="2000" name="J. Mol. Biol.">
        <title>Three-dimensional structure of a presynaptic neurotoxic phospholipase A2 from Daboia russelli pulchella at 2.4 A resolution.</title>
        <authorList>
            <person name="Chandra V."/>
            <person name="Kaur P."/>
            <person name="Srinivasan A."/>
            <person name="Singh T.P."/>
        </authorList>
    </citation>
    <scope>X-RAY CRYSTALLOGRAPHY (2.45 ANGSTROMS) OF 1-38</scope>
</reference>
<reference key="8">
    <citation type="journal article" date="2001" name="Acta Crystallogr. D">
        <title>Regulation of catalytic function by molecular association: structure of phospholipase A2 from Daboia russelli pulchella (DPLA2) at 1.9 A resolution.</title>
        <authorList>
            <person name="Chandra V."/>
            <person name="Kaur P."/>
            <person name="Jasti J."/>
            <person name="Betzel C."/>
            <person name="Singh T.P."/>
        </authorList>
    </citation>
    <scope>X-RAY CRYSTALLOGRAPHY (1.95 ANGSTROMS) OF 1-49</scope>
</reference>
<reference key="9">
    <citation type="journal article" date="2002" name="Acta Crystallogr. D">
        <title>Design of specific peptide inhibitors of phospholipase A2: structure of a complex formed between Russell's viper phospholipase A2 and a designed peptide Leu-Ala-Ile-Tyr-Ser (LAIYS).</title>
        <authorList>
            <person name="Chandra V."/>
            <person name="Jasti J."/>
            <person name="Kaur P."/>
            <person name="Dey S."/>
            <person name="Srinivasan A."/>
            <person name="Betzel C."/>
            <person name="Singh T.P."/>
        </authorList>
    </citation>
    <scope>X-RAY CRYSTALLOGRAPHY (2.0 ANGSTROMS)</scope>
    <scope>DISULFIDE BONDS</scope>
</reference>
<reference key="10">
    <citation type="journal article" date="2002" name="Biochemistry">
        <title>Structural basis of phospholipase A2 inhibition for the synthesis of prostaglandins by the plant alkaloid aristolochic acid from a 1.7 A crystal structure.</title>
        <authorList>
            <person name="Chandra V."/>
            <person name="Jasti J."/>
            <person name="Kaur P."/>
            <person name="Srinivasan A."/>
            <person name="Betzel C."/>
            <person name="Singh T.P."/>
        </authorList>
    </citation>
    <scope>X-RAY CRYSTALLOGRAPHY (1.70 ANGSTROMS) OF 1-49</scope>
</reference>
<reference key="11">
    <citation type="journal article" date="2002" name="J. Biol. Chem.">
        <title>Crystal structure of a complex formed between a snake venom phospholipase A(2) and a potent peptide inhibitor Phe-Leu-Ser-Tyr-Lys at 1.8 A resolution.</title>
        <authorList>
            <person name="Chandra V."/>
            <person name="Jasti J."/>
            <person name="Kaur P."/>
            <person name="Dey S."/>
            <person name="Perbandt M."/>
            <person name="Srinivasan A."/>
            <person name="Betzel C."/>
            <person name="Singh T.P."/>
        </authorList>
    </citation>
    <scope>X-RAY CRYSTALLOGRAPHY (1.8 ANGSTROMS)</scope>
    <scope>DISULFIDE BONDS</scope>
</reference>
<reference evidence="23" key="12">
    <citation type="submission" date="2004-05" db="PDB data bank">
        <title>Crystal structure of a complex formed between group II phospholipase A2 and aspirin at 1.86 A resolution.</title>
        <authorList>
            <person name="Singh N."/>
            <person name="Jabeen T."/>
            <person name="Sharma S."/>
            <person name="Bhushan A."/>
            <person name="Singh T.P."/>
        </authorList>
    </citation>
    <scope>X-RAY CRYSTALLOGRAPHY (1.86 ANGSTROMS) IN COMPLEX WITH ASPIRIN AND CALCIUM ION</scope>
    <scope>COFACTOR</scope>
    <scope>DISULFIDE BONDS</scope>
</reference>
<reference evidence="21" key="13">
    <citation type="journal article" date="2004" name="Biochemistry">
        <title>Phospholipase A2 as a target protein for nonsteroidal anti-inflammatory drugs (NSAIDS): crystal structure of the complex formed between phospholipase A2 and oxyphenbutazone at 1.6 A resolution.</title>
        <authorList>
            <person name="Singh N."/>
            <person name="Jabeen T."/>
            <person name="Somvanshi R.K."/>
            <person name="Sharma S."/>
            <person name="Dey S."/>
            <person name="Singh T.P."/>
        </authorList>
    </citation>
    <scope>X-RAY CRYSTALLOGRAPHY (1.60 ANGSTROMS) IN COMPLEX WITH THE ANTI-INFLAMMATORY COMPOUND OXYPHENBUTAZONE</scope>
    <scope>DISULFIDE BONDS</scope>
    <scope>ACTIVITY REGULATION</scope>
    <source>
        <tissue>Venom</tissue>
    </source>
</reference>
<reference evidence="22 24" key="14">
    <citation type="journal article" date="2006" name="Proteins">
        <title>Crystal structures of the complexes of a group IIA phospholipase A2 with two natural anti-inflammatory agents, anisic acid, and atropine reveal a similar mode of binding.</title>
        <authorList>
            <person name="Singh N."/>
            <person name="Jabeen T."/>
            <person name="Pal A."/>
            <person name="Sharma S."/>
            <person name="Perbandt M."/>
            <person name="Betzel C."/>
            <person name="Singh T.P."/>
        </authorList>
    </citation>
    <scope>X-RAY CRYSTALLOGRAPHY (1.23 ANGSTROMS) IN COMPLEX WITH THE NATURAL ANTI-INFLAMMATORY COMPOUNDS ANISIC ACID AND ATROPINE</scope>
    <scope>CATALYTIC ACTIVITY</scope>
    <scope>DISULFIDE BONDS</scope>
    <scope>ACTIVITY REGULATION</scope>
    <scope>SUBUNIT</scope>
    <source>
        <tissue>Venom</tissue>
    </source>
</reference>
<reference evidence="25 26 27 28 29" key="15">
    <citation type="journal article" date="2015" name="Biochim. Biophys. Acta">
        <title>Structures and binding studies of the complexes of phospholipase A2 with five inhibitors.</title>
        <authorList>
            <person name="Shukla P.K."/>
            <person name="Gautam L."/>
            <person name="Sinha M."/>
            <person name="Kaur P."/>
            <person name="Sharma S."/>
            <person name="Singh T.P."/>
        </authorList>
    </citation>
    <scope>X-RAY CRYSTALLOGRAPHY (1.20 ANGSTROMS) IN COMPLEX WITH P-COUMARIC ACID</scope>
    <scope>RESVERATROL</scope>
    <scope>SPERMIDINE</scope>
    <scope>CORTICOSTERONE AND GRAMINE DERIVATIVE</scope>
    <scope>DISULFIDE BONDS</scope>
    <scope>ACTIVITY REGULATION</scope>
</reference>
<protein>
    <recommendedName>
        <fullName>Basic phospholipase A2 VRV-PL-VIIIa</fullName>
        <shortName>svPLA2</shortName>
        <ecNumber evidence="5">3.1.1.4</ecNumber>
    </recommendedName>
    <alternativeName>
        <fullName>DPLA2</fullName>
    </alternativeName>
    <alternativeName>
        <fullName>P1</fullName>
    </alternativeName>
    <alternativeName>
        <fullName>Phosphatidylcholine 2-acylhydrolase</fullName>
    </alternativeName>
    <alternativeName>
        <fullName>Phospholipase A2 4</fullName>
        <shortName>PLA24</shortName>
    </alternativeName>
</protein>
<keyword id="KW-0002">3D-structure</keyword>
<keyword id="KW-1203">Blood coagulation cascade inhibiting toxin</keyword>
<keyword id="KW-0106">Calcium</keyword>
<keyword id="KW-0903">Direct protein sequencing</keyword>
<keyword id="KW-1015">Disulfide bond</keyword>
<keyword id="KW-1199">Hemostasis impairing toxin</keyword>
<keyword id="KW-0378">Hydrolase</keyword>
<keyword id="KW-0442">Lipid degradation</keyword>
<keyword id="KW-0443">Lipid metabolism</keyword>
<keyword id="KW-0479">Metal-binding</keyword>
<keyword id="KW-0959">Myotoxin</keyword>
<keyword id="KW-0528">Neurotoxin</keyword>
<keyword id="KW-0638">Presynaptic neurotoxin</keyword>
<keyword id="KW-0964">Secreted</keyword>
<keyword id="KW-0800">Toxin</keyword>
<sequence>SLLEFGKMILEETGKLAIPSYSSYGCYCGWGGKGTPKDATDRCCFVHDCCYGNLPDCNPKSDRYKYKRVNGAIVCEKGTSCENRICECDKAAAICFRQNLNTYSKKYMLYPDFLCKGELKC</sequence>
<proteinExistence type="evidence at protein level"/>
<organism>
    <name type="scientific">Daboia russelii</name>
    <name type="common">Russel's viper</name>
    <name type="synonym">Vipera russelii</name>
    <dbReference type="NCBI Taxonomy" id="8707"/>
    <lineage>
        <taxon>Eukaryota</taxon>
        <taxon>Metazoa</taxon>
        <taxon>Chordata</taxon>
        <taxon>Craniata</taxon>
        <taxon>Vertebrata</taxon>
        <taxon>Euteleostomi</taxon>
        <taxon>Lepidosauria</taxon>
        <taxon>Squamata</taxon>
        <taxon>Bifurcata</taxon>
        <taxon>Unidentata</taxon>
        <taxon>Episquamata</taxon>
        <taxon>Toxicofera</taxon>
        <taxon>Serpentes</taxon>
        <taxon>Colubroidea</taxon>
        <taxon>Viperidae</taxon>
        <taxon>Viperinae</taxon>
        <taxon>Daboia</taxon>
    </lineage>
</organism>
<accession>P59071</accession>
<accession>D0VX11</accession>
<evidence type="ECO:0000250" key="1">
    <source>
        <dbReference type="UniProtKB" id="P14418"/>
    </source>
</evidence>
<evidence type="ECO:0000269" key="2">
    <source>
    </source>
</evidence>
<evidence type="ECO:0000269" key="3">
    <source>
    </source>
</evidence>
<evidence type="ECO:0000269" key="4">
    <source>
    </source>
</evidence>
<evidence type="ECO:0000269" key="5">
    <source>
    </source>
</evidence>
<evidence type="ECO:0000269" key="6">
    <source>
    </source>
</evidence>
<evidence type="ECO:0000269" key="7">
    <source>
    </source>
</evidence>
<evidence type="ECO:0000269" key="8">
    <source>
    </source>
</evidence>
<evidence type="ECO:0000269" key="9">
    <source>
    </source>
</evidence>
<evidence type="ECO:0000269" key="10">
    <source>
    </source>
</evidence>
<evidence type="ECO:0000269" key="11">
    <source>
    </source>
</evidence>
<evidence type="ECO:0000269" key="12">
    <source>
    </source>
</evidence>
<evidence type="ECO:0000269" key="13">
    <source ref="12"/>
</evidence>
<evidence type="ECO:0000305" key="14"/>
<evidence type="ECO:0000305" key="15">
    <source>
    </source>
</evidence>
<evidence type="ECO:0000305" key="16">
    <source>
    </source>
</evidence>
<evidence type="ECO:0000305" key="17">
    <source>
    </source>
</evidence>
<evidence type="ECO:0000305" key="18">
    <source>
    </source>
</evidence>
<evidence type="ECO:0000305" key="19">
    <source>
    </source>
</evidence>
<evidence type="ECO:0000305" key="20">
    <source ref="12"/>
</evidence>
<evidence type="ECO:0000312" key="21">
    <source>
        <dbReference type="PDB" id="1Q7A"/>
    </source>
</evidence>
<evidence type="ECO:0000312" key="22">
    <source>
        <dbReference type="PDB" id="1SV3"/>
    </source>
</evidence>
<evidence type="ECO:0000312" key="23">
    <source>
        <dbReference type="PDB" id="1TGM"/>
    </source>
</evidence>
<evidence type="ECO:0000312" key="24">
    <source>
        <dbReference type="PDB" id="2ARM"/>
    </source>
</evidence>
<evidence type="ECO:0000312" key="25">
    <source>
        <dbReference type="PDB" id="4QEM"/>
    </source>
</evidence>
<evidence type="ECO:0000312" key="26">
    <source>
        <dbReference type="PDB" id="4QER"/>
    </source>
</evidence>
<evidence type="ECO:0000312" key="27">
    <source>
        <dbReference type="PDB" id="4QF7"/>
    </source>
</evidence>
<evidence type="ECO:0000312" key="28">
    <source>
        <dbReference type="PDB" id="4QF8"/>
    </source>
</evidence>
<evidence type="ECO:0000312" key="29">
    <source>
        <dbReference type="PDB" id="4QGD"/>
    </source>
</evidence>
<evidence type="ECO:0007744" key="30">
    <source>
        <dbReference type="PDB" id="1JQ8"/>
    </source>
</evidence>
<evidence type="ECO:0007744" key="31">
    <source>
        <dbReference type="PDB" id="1JQ9"/>
    </source>
</evidence>
<evidence type="ECO:0007744" key="32">
    <source>
        <dbReference type="PDB" id="1TGM"/>
    </source>
</evidence>
<evidence type="ECO:0007829" key="33">
    <source>
        <dbReference type="PDB" id="1TJ9"/>
    </source>
</evidence>
<evidence type="ECO:0007829" key="34">
    <source>
        <dbReference type="PDB" id="2G58"/>
    </source>
</evidence>
<evidence type="ECO:0007829" key="35">
    <source>
        <dbReference type="PDB" id="3CBI"/>
    </source>
</evidence>
<evidence type="ECO:0007829" key="36">
    <source>
        <dbReference type="PDB" id="4GFY"/>
    </source>
</evidence>
<dbReference type="EC" id="3.1.1.4" evidence="5"/>
<dbReference type="PDB" id="1CL5">
    <property type="method" value="X-ray"/>
    <property type="resolution" value="2.45 A"/>
    <property type="chains" value="A/B=1-121"/>
</dbReference>
<dbReference type="PDB" id="1FB2">
    <property type="method" value="X-ray"/>
    <property type="resolution" value="1.95 A"/>
    <property type="chains" value="A/B=1-121"/>
</dbReference>
<dbReference type="PDB" id="1FV0">
    <property type="method" value="X-ray"/>
    <property type="resolution" value="1.70 A"/>
    <property type="chains" value="A/B=1-121"/>
</dbReference>
<dbReference type="PDB" id="1JQ8">
    <property type="method" value="X-ray"/>
    <property type="resolution" value="2.00 A"/>
    <property type="chains" value="A/B=1-121"/>
</dbReference>
<dbReference type="PDB" id="1JQ9">
    <property type="method" value="X-ray"/>
    <property type="resolution" value="1.80 A"/>
    <property type="chains" value="A/B=1-121"/>
</dbReference>
<dbReference type="PDB" id="1KPM">
    <property type="method" value="X-ray"/>
    <property type="resolution" value="1.80 A"/>
    <property type="chains" value="A/B=1-121"/>
</dbReference>
<dbReference type="PDB" id="1OXL">
    <property type="method" value="X-ray"/>
    <property type="resolution" value="1.80 A"/>
    <property type="chains" value="A/B=1-121"/>
</dbReference>
<dbReference type="PDB" id="1OYF">
    <property type="method" value="X-ray"/>
    <property type="resolution" value="2.45 A"/>
    <property type="chains" value="A=1-121"/>
</dbReference>
<dbReference type="PDB" id="1Q6V">
    <property type="method" value="X-ray"/>
    <property type="resolution" value="1.86 A"/>
    <property type="chains" value="A=1-121"/>
</dbReference>
<dbReference type="PDB" id="1Q7A">
    <property type="method" value="X-ray"/>
    <property type="resolution" value="1.60 A"/>
    <property type="chains" value="A=1-121"/>
</dbReference>
<dbReference type="PDB" id="1SKG">
    <property type="method" value="X-ray"/>
    <property type="resolution" value="1.21 A"/>
    <property type="chains" value="A=1-121"/>
</dbReference>
<dbReference type="PDB" id="1SQZ">
    <property type="method" value="X-ray"/>
    <property type="resolution" value="1.20 A"/>
    <property type="chains" value="A=1-121"/>
</dbReference>
<dbReference type="PDB" id="1SV3">
    <property type="method" value="X-ray"/>
    <property type="resolution" value="1.35 A"/>
    <property type="chains" value="A=1-121"/>
</dbReference>
<dbReference type="PDB" id="1SV9">
    <property type="method" value="X-ray"/>
    <property type="resolution" value="2.71 A"/>
    <property type="chains" value="A=1-121"/>
</dbReference>
<dbReference type="PDB" id="1SXK">
    <property type="method" value="X-ray"/>
    <property type="resolution" value="1.21 A"/>
    <property type="chains" value="A=1-121"/>
</dbReference>
<dbReference type="PDB" id="1TDV">
    <property type="method" value="X-ray"/>
    <property type="resolution" value="1.70 A"/>
    <property type="chains" value="A=1-121"/>
</dbReference>
<dbReference type="PDB" id="1TG1">
    <property type="method" value="X-ray"/>
    <property type="resolution" value="1.25 A"/>
    <property type="chains" value="A=1-121"/>
</dbReference>
<dbReference type="PDB" id="1TG4">
    <property type="method" value="X-ray"/>
    <property type="resolution" value="1.70 A"/>
    <property type="chains" value="A=1-121"/>
</dbReference>
<dbReference type="PDB" id="1TGM">
    <property type="method" value="X-ray"/>
    <property type="resolution" value="1.86 A"/>
    <property type="chains" value="A=1-121"/>
</dbReference>
<dbReference type="PDB" id="1TH6">
    <property type="method" value="X-ray"/>
    <property type="resolution" value="1.23 A"/>
    <property type="chains" value="A=1-121"/>
</dbReference>
<dbReference type="PDB" id="1TJ9">
    <property type="method" value="X-ray"/>
    <property type="resolution" value="1.10 A"/>
    <property type="chains" value="A=1-121"/>
</dbReference>
<dbReference type="PDB" id="1TJK">
    <property type="method" value="X-ray"/>
    <property type="resolution" value="1.25 A"/>
    <property type="chains" value="A=1-121"/>
</dbReference>
<dbReference type="PDB" id="1TK4">
    <property type="method" value="X-ray"/>
    <property type="resolution" value="1.10 A"/>
    <property type="chains" value="A=1-121"/>
</dbReference>
<dbReference type="PDB" id="1TP2">
    <property type="method" value="X-ray"/>
    <property type="resolution" value="2.40 A"/>
    <property type="chains" value="A/B=1-121"/>
</dbReference>
<dbReference type="PDB" id="1Y38">
    <property type="method" value="X-ray"/>
    <property type="resolution" value="2.44 A"/>
    <property type="chains" value="A/B=1-121"/>
</dbReference>
<dbReference type="PDB" id="1ZR8">
    <property type="method" value="X-ray"/>
    <property type="resolution" value="2.03 A"/>
    <property type="chains" value="A=1-121"/>
</dbReference>
<dbReference type="PDB" id="1ZWP">
    <property type="method" value="X-ray"/>
    <property type="resolution" value="1.10 A"/>
    <property type="chains" value="A=1-121"/>
</dbReference>
<dbReference type="PDB" id="1ZYX">
    <property type="method" value="X-ray"/>
    <property type="resolution" value="1.95 A"/>
    <property type="chains" value="A=1-121"/>
</dbReference>
<dbReference type="PDB" id="2ARM">
    <property type="method" value="X-ray"/>
    <property type="resolution" value="1.23 A"/>
    <property type="chains" value="A=1-121"/>
</dbReference>
<dbReference type="PDB" id="2B17">
    <property type="method" value="X-ray"/>
    <property type="resolution" value="2.71 A"/>
    <property type="chains" value="A=1-121"/>
</dbReference>
<dbReference type="PDB" id="2DO2">
    <property type="method" value="X-ray"/>
    <property type="resolution" value="2.60 A"/>
    <property type="chains" value="A=1-121"/>
</dbReference>
<dbReference type="PDB" id="2DPZ">
    <property type="method" value="X-ray"/>
    <property type="resolution" value="2.10 A"/>
    <property type="chains" value="A=1-121"/>
</dbReference>
<dbReference type="PDB" id="2FNX">
    <property type="method" value="X-ray"/>
    <property type="resolution" value="2.70 A"/>
    <property type="chains" value="A=1-121"/>
</dbReference>
<dbReference type="PDB" id="2G58">
    <property type="method" value="X-ray"/>
    <property type="resolution" value="0.98 A"/>
    <property type="chains" value="A=1-121"/>
</dbReference>
<dbReference type="PDB" id="2GNS">
    <property type="method" value="X-ray"/>
    <property type="resolution" value="2.30 A"/>
    <property type="chains" value="A=1-121"/>
</dbReference>
<dbReference type="PDB" id="2O1N">
    <property type="method" value="X-ray"/>
    <property type="resolution" value="2.80 A"/>
    <property type="chains" value="A=1-121"/>
</dbReference>
<dbReference type="PDB" id="2OLI">
    <property type="method" value="X-ray"/>
    <property type="resolution" value="2.21 A"/>
    <property type="chains" value="A=1-121"/>
</dbReference>
<dbReference type="PDB" id="2OTF">
    <property type="method" value="X-ray"/>
    <property type="resolution" value="1.95 A"/>
    <property type="chains" value="A=1-121"/>
</dbReference>
<dbReference type="PDB" id="2OTH">
    <property type="method" value="X-ray"/>
    <property type="resolution" value="2.90 A"/>
    <property type="chains" value="A=1-121"/>
</dbReference>
<dbReference type="PDB" id="2OUB">
    <property type="method" value="X-ray"/>
    <property type="resolution" value="2.75 A"/>
    <property type="chains" value="A=1-121"/>
</dbReference>
<dbReference type="PDB" id="2OYF">
    <property type="method" value="X-ray"/>
    <property type="resolution" value="1.20 A"/>
    <property type="chains" value="A=1-121"/>
</dbReference>
<dbReference type="PDB" id="2PB8">
    <property type="method" value="X-ray"/>
    <property type="resolution" value="2.00 A"/>
    <property type="chains" value="A=1-121"/>
</dbReference>
<dbReference type="PDB" id="2PMJ">
    <property type="method" value="X-ray"/>
    <property type="resolution" value="2.40 A"/>
    <property type="chains" value="A=1-121"/>
</dbReference>
<dbReference type="PDB" id="2PVT">
    <property type="method" value="X-ray"/>
    <property type="resolution" value="2.10 A"/>
    <property type="chains" value="A=1-121"/>
</dbReference>
<dbReference type="PDB" id="2PWS">
    <property type="method" value="X-ray"/>
    <property type="resolution" value="2.21 A"/>
    <property type="chains" value="A=1-121"/>
</dbReference>
<dbReference type="PDB" id="2PYC">
    <property type="method" value="X-ray"/>
    <property type="resolution" value="1.50 A"/>
    <property type="chains" value="A=1-121"/>
</dbReference>
<dbReference type="PDB" id="2Q1P">
    <property type="method" value="X-ray"/>
    <property type="resolution" value="1.50 A"/>
    <property type="chains" value="A=1-121"/>
</dbReference>
<dbReference type="PDB" id="2QHW">
    <property type="method" value="X-ray"/>
    <property type="resolution" value="2.21 A"/>
    <property type="chains" value="A=1-121"/>
</dbReference>
<dbReference type="PDB" id="2QU9">
    <property type="method" value="X-ray"/>
    <property type="resolution" value="2.08 A"/>
    <property type="chains" value="A=1-121"/>
</dbReference>
<dbReference type="PDB" id="2QUE">
    <property type="method" value="X-ray"/>
    <property type="resolution" value="2.25 A"/>
    <property type="chains" value="A=1-121"/>
</dbReference>
<dbReference type="PDB" id="2QVD">
    <property type="method" value="X-ray"/>
    <property type="resolution" value="1.93 A"/>
    <property type="chains" value="A=1-121"/>
</dbReference>
<dbReference type="PDB" id="2ZBH">
    <property type="method" value="X-ray"/>
    <property type="resolution" value="2.60 A"/>
    <property type="chains" value="A=1-121"/>
</dbReference>
<dbReference type="PDB" id="3CBI">
    <property type="method" value="X-ray"/>
    <property type="resolution" value="3.15 A"/>
    <property type="chains" value="A/B/C/D=1-121"/>
</dbReference>
<dbReference type="PDB" id="3FO7">
    <property type="method" value="X-ray"/>
    <property type="resolution" value="1.40 A"/>
    <property type="chains" value="A=1-121"/>
</dbReference>
<dbReference type="PDB" id="3G8F">
    <property type="method" value="X-ray"/>
    <property type="resolution" value="1.25 A"/>
    <property type="chains" value="A=1-121"/>
</dbReference>
<dbReference type="PDB" id="3H1X">
    <property type="method" value="X-ray"/>
    <property type="resolution" value="1.40 A"/>
    <property type="chains" value="A=1-121"/>
</dbReference>
<dbReference type="PDB" id="4EIX">
    <property type="method" value="X-ray"/>
    <property type="resolution" value="2.90 A"/>
    <property type="chains" value="A=1-121"/>
</dbReference>
<dbReference type="PDB" id="4FGA">
    <property type="method" value="X-ray"/>
    <property type="resolution" value="2.30 A"/>
    <property type="chains" value="A=1-121"/>
</dbReference>
<dbReference type="PDB" id="4GFY">
    <property type="method" value="X-ray"/>
    <property type="resolution" value="2.70 A"/>
    <property type="chains" value="A=1-121"/>
</dbReference>
<dbReference type="PDB" id="4GLD">
    <property type="method" value="X-ray"/>
    <property type="resolution" value="1.69 A"/>
    <property type="chains" value="A=1-121"/>
</dbReference>
<dbReference type="PDB" id="4HMB">
    <property type="method" value="X-ray"/>
    <property type="resolution" value="2.21 A"/>
    <property type="chains" value="A=1-121"/>
</dbReference>
<dbReference type="PDB" id="4QEM">
    <property type="method" value="X-ray"/>
    <property type="resolution" value="1.20 A"/>
    <property type="chains" value="A=1-121"/>
</dbReference>
<dbReference type="PDB" id="4QER">
    <property type="method" value="X-ray"/>
    <property type="resolution" value="1.20 A"/>
    <property type="chains" value="A=1-121"/>
</dbReference>
<dbReference type="PDB" id="4QF7">
    <property type="method" value="X-ray"/>
    <property type="resolution" value="1.48 A"/>
    <property type="chains" value="A=1-121"/>
</dbReference>
<dbReference type="PDB" id="4QF8">
    <property type="method" value="X-ray"/>
    <property type="resolution" value="1.65 A"/>
    <property type="chains" value="A=1-121"/>
</dbReference>
<dbReference type="PDB" id="4QGD">
    <property type="method" value="X-ray"/>
    <property type="resolution" value="1.80 A"/>
    <property type="chains" value="A=1-121"/>
</dbReference>
<dbReference type="PDB" id="4QMC">
    <property type="method" value="X-ray"/>
    <property type="resolution" value="1.09 A"/>
    <property type="chains" value="A=1-121"/>
</dbReference>
<dbReference type="PDB" id="5VET">
    <property type="method" value="X-ray"/>
    <property type="resolution" value="2.00 A"/>
    <property type="chains" value="A/B=1-121"/>
</dbReference>
<dbReference type="PDBsum" id="1CL5"/>
<dbReference type="PDBsum" id="1FB2"/>
<dbReference type="PDBsum" id="1FV0"/>
<dbReference type="PDBsum" id="1JQ8"/>
<dbReference type="PDBsum" id="1JQ9"/>
<dbReference type="PDBsum" id="1KPM"/>
<dbReference type="PDBsum" id="1OXL"/>
<dbReference type="PDBsum" id="1OYF"/>
<dbReference type="PDBsum" id="1Q6V"/>
<dbReference type="PDBsum" id="1Q7A"/>
<dbReference type="PDBsum" id="1SKG"/>
<dbReference type="PDBsum" id="1SQZ"/>
<dbReference type="PDBsum" id="1SV3"/>
<dbReference type="PDBsum" id="1SV9"/>
<dbReference type="PDBsum" id="1SXK"/>
<dbReference type="PDBsum" id="1TDV"/>
<dbReference type="PDBsum" id="1TG1"/>
<dbReference type="PDBsum" id="1TG4"/>
<dbReference type="PDBsum" id="1TGM"/>
<dbReference type="PDBsum" id="1TH6"/>
<dbReference type="PDBsum" id="1TJ9"/>
<dbReference type="PDBsum" id="1TJK"/>
<dbReference type="PDBsum" id="1TK4"/>
<dbReference type="PDBsum" id="1TP2"/>
<dbReference type="PDBsum" id="1Y38"/>
<dbReference type="PDBsum" id="1ZR8"/>
<dbReference type="PDBsum" id="1ZWP"/>
<dbReference type="PDBsum" id="1ZYX"/>
<dbReference type="PDBsum" id="2ARM"/>
<dbReference type="PDBsum" id="2B17"/>
<dbReference type="PDBsum" id="2DO2"/>
<dbReference type="PDBsum" id="2DPZ"/>
<dbReference type="PDBsum" id="2FNX"/>
<dbReference type="PDBsum" id="2G58"/>
<dbReference type="PDBsum" id="2GNS"/>
<dbReference type="PDBsum" id="2O1N"/>
<dbReference type="PDBsum" id="2OLI"/>
<dbReference type="PDBsum" id="2OTF"/>
<dbReference type="PDBsum" id="2OTH"/>
<dbReference type="PDBsum" id="2OUB"/>
<dbReference type="PDBsum" id="2OYF"/>
<dbReference type="PDBsum" id="2PB8"/>
<dbReference type="PDBsum" id="2PMJ"/>
<dbReference type="PDBsum" id="2PVT"/>
<dbReference type="PDBsum" id="2PWS"/>
<dbReference type="PDBsum" id="2PYC"/>
<dbReference type="PDBsum" id="2Q1P"/>
<dbReference type="PDBsum" id="2QHW"/>
<dbReference type="PDBsum" id="2QU9"/>
<dbReference type="PDBsum" id="2QUE"/>
<dbReference type="PDBsum" id="2QVD"/>
<dbReference type="PDBsum" id="2ZBH"/>
<dbReference type="PDBsum" id="3CBI"/>
<dbReference type="PDBsum" id="3FO7"/>
<dbReference type="PDBsum" id="3G8F"/>
<dbReference type="PDBsum" id="3H1X"/>
<dbReference type="PDBsum" id="4EIX"/>
<dbReference type="PDBsum" id="4FGA"/>
<dbReference type="PDBsum" id="4GFY"/>
<dbReference type="PDBsum" id="4GLD"/>
<dbReference type="PDBsum" id="4HMB"/>
<dbReference type="PDBsum" id="4QEM"/>
<dbReference type="PDBsum" id="4QER"/>
<dbReference type="PDBsum" id="4QF7"/>
<dbReference type="PDBsum" id="4QF8"/>
<dbReference type="PDBsum" id="4QGD"/>
<dbReference type="PDBsum" id="4QMC"/>
<dbReference type="PDBsum" id="5VET"/>
<dbReference type="SMR" id="P59071"/>
<dbReference type="BindingDB" id="P59071"/>
<dbReference type="ChEMBL" id="CHEMBL3784910"/>
<dbReference type="BRENDA" id="3.1.1.4">
    <property type="organism ID" value="5485"/>
</dbReference>
<dbReference type="EvolutionaryTrace" id="P59071"/>
<dbReference type="GO" id="GO:0005576">
    <property type="term" value="C:extracellular region"/>
    <property type="evidence" value="ECO:0007669"/>
    <property type="project" value="UniProtKB-SubCell"/>
</dbReference>
<dbReference type="GO" id="GO:0005509">
    <property type="term" value="F:calcium ion binding"/>
    <property type="evidence" value="ECO:0007669"/>
    <property type="project" value="InterPro"/>
</dbReference>
<dbReference type="GO" id="GO:0047498">
    <property type="term" value="F:calcium-dependent phospholipase A2 activity"/>
    <property type="evidence" value="ECO:0007669"/>
    <property type="project" value="TreeGrafter"/>
</dbReference>
<dbReference type="GO" id="GO:0005543">
    <property type="term" value="F:phospholipid binding"/>
    <property type="evidence" value="ECO:0007669"/>
    <property type="project" value="TreeGrafter"/>
</dbReference>
<dbReference type="GO" id="GO:0090729">
    <property type="term" value="F:toxin activity"/>
    <property type="evidence" value="ECO:0007669"/>
    <property type="project" value="UniProtKB-KW"/>
</dbReference>
<dbReference type="GO" id="GO:0050482">
    <property type="term" value="P:arachidonate secretion"/>
    <property type="evidence" value="ECO:0007669"/>
    <property type="project" value="InterPro"/>
</dbReference>
<dbReference type="GO" id="GO:0016042">
    <property type="term" value="P:lipid catabolic process"/>
    <property type="evidence" value="ECO:0007669"/>
    <property type="project" value="UniProtKB-KW"/>
</dbReference>
<dbReference type="GO" id="GO:0042130">
    <property type="term" value="P:negative regulation of T cell proliferation"/>
    <property type="evidence" value="ECO:0007669"/>
    <property type="project" value="TreeGrafter"/>
</dbReference>
<dbReference type="GO" id="GO:0006644">
    <property type="term" value="P:phospholipid metabolic process"/>
    <property type="evidence" value="ECO:0007669"/>
    <property type="project" value="InterPro"/>
</dbReference>
<dbReference type="CDD" id="cd00125">
    <property type="entry name" value="PLA2c"/>
    <property type="match status" value="1"/>
</dbReference>
<dbReference type="FunFam" id="1.20.90.10:FF:000001">
    <property type="entry name" value="Basic phospholipase A2 homolog"/>
    <property type="match status" value="1"/>
</dbReference>
<dbReference type="Gene3D" id="1.20.90.10">
    <property type="entry name" value="Phospholipase A2 domain"/>
    <property type="match status" value="1"/>
</dbReference>
<dbReference type="InterPro" id="IPR001211">
    <property type="entry name" value="PLipase_A2"/>
</dbReference>
<dbReference type="InterPro" id="IPR033112">
    <property type="entry name" value="PLipase_A2_Asp_AS"/>
</dbReference>
<dbReference type="InterPro" id="IPR016090">
    <property type="entry name" value="PLipase_A2_dom"/>
</dbReference>
<dbReference type="InterPro" id="IPR036444">
    <property type="entry name" value="PLipase_A2_dom_sf"/>
</dbReference>
<dbReference type="InterPro" id="IPR033113">
    <property type="entry name" value="PLipase_A2_His_AS"/>
</dbReference>
<dbReference type="PANTHER" id="PTHR11716">
    <property type="entry name" value="PHOSPHOLIPASE A2 FAMILY MEMBER"/>
    <property type="match status" value="1"/>
</dbReference>
<dbReference type="PANTHER" id="PTHR11716:SF9">
    <property type="entry name" value="PHOSPHOLIPASE A2, MEMBRANE ASSOCIATED"/>
    <property type="match status" value="1"/>
</dbReference>
<dbReference type="Pfam" id="PF00068">
    <property type="entry name" value="Phospholip_A2_1"/>
    <property type="match status" value="1"/>
</dbReference>
<dbReference type="PRINTS" id="PR00389">
    <property type="entry name" value="PHPHLIPASEA2"/>
</dbReference>
<dbReference type="SMART" id="SM00085">
    <property type="entry name" value="PA2c"/>
    <property type="match status" value="1"/>
</dbReference>
<dbReference type="SUPFAM" id="SSF48619">
    <property type="entry name" value="Phospholipase A2, PLA2"/>
    <property type="match status" value="1"/>
</dbReference>
<dbReference type="PROSITE" id="PS00119">
    <property type="entry name" value="PA2_ASP"/>
    <property type="match status" value="1"/>
</dbReference>
<dbReference type="PROSITE" id="PS00118">
    <property type="entry name" value="PA2_HIS"/>
    <property type="match status" value="1"/>
</dbReference>
<comment type="function">
    <text evidence="6 8 12">Snake venom phospholipase A2 (PLA2) that shows weak neurotoxicity and medium anticoagulant effects by binding to factor Xa (F10) and inhibiting the prothrombinase activity (IC(50) is 130 nM) (PubMed:18062812). It also damages vital organs such as lung, liver and kidney, displays edema-inducing activities when injected into the foot pads of mice and induces necrosis of muscle cells when injected into the thigh muscle. Has a low enzymatic activity. PLA2 catalyzes the calcium-dependent hydrolysis of the 2-acyl groups in 3-sn-phosphoglycerides.</text>
</comment>
<comment type="catalytic activity">
    <reaction evidence="5">
        <text>a 1,2-diacyl-sn-glycero-3-phosphocholine + H2O = a 1-acyl-sn-glycero-3-phosphocholine + a fatty acid + H(+)</text>
        <dbReference type="Rhea" id="RHEA:15801"/>
        <dbReference type="ChEBI" id="CHEBI:15377"/>
        <dbReference type="ChEBI" id="CHEBI:15378"/>
        <dbReference type="ChEBI" id="CHEBI:28868"/>
        <dbReference type="ChEBI" id="CHEBI:57643"/>
        <dbReference type="ChEBI" id="CHEBI:58168"/>
        <dbReference type="EC" id="3.1.1.4"/>
    </reaction>
</comment>
<comment type="cofactor">
    <cofactor evidence="20">
        <name>Ca(2+)</name>
        <dbReference type="ChEBI" id="CHEBI:29108"/>
    </cofactor>
    <text evidence="20">Binds 1 Ca(2+) ion.</text>
</comment>
<comment type="activity regulation">
    <text evidence="4 5 9">Oxyphenbutazone (OPB), anisic acid and atropine inhibit the enzymatic activity by binding at the substrate-binding site (PubMed:15544328, PubMed:16596639). P-coumaric acid, resveratrol, spermidine, corticosterone and gramine derivative inhibit the enzymatic activity by binding at the substrate-binding site (PubMed:25541253).</text>
</comment>
<comment type="subunit">
    <text evidence="5 11">Monomer.</text>
</comment>
<comment type="subcellular location">
    <subcellularLocation>
        <location evidence="7 11 12">Secreted</location>
    </subcellularLocation>
</comment>
<comment type="tissue specificity">
    <text evidence="17 18 19">Expressed by the venom gland.</text>
</comment>
<comment type="toxic dose">
    <text evidence="10 12">LD(50) is between 5.3 and 5.5 mg/kg by intravenous injection into mice.</text>
</comment>
<comment type="miscellaneous">
    <text evidence="15 16">D.russelli pulchella is synonymous with D.russelii.</text>
</comment>
<comment type="similarity">
    <text evidence="14">Belongs to the phospholipase A2 family. Group II subfamily. D49 sub-subfamily.</text>
</comment>
<feature type="chain" id="PRO_0000161717" description="Basic phospholipase A2 VRV-PL-VIIIa" evidence="11">
    <location>
        <begin position="1"/>
        <end position="121"/>
    </location>
</feature>
<feature type="active site" evidence="1">
    <location>
        <position position="47"/>
    </location>
</feature>
<feature type="active site" evidence="1">
    <location>
        <position position="89"/>
    </location>
</feature>
<feature type="binding site" evidence="13 32">
    <location>
        <position position="27"/>
    </location>
    <ligand>
        <name>Ca(2+)</name>
        <dbReference type="ChEBI" id="CHEBI:29108"/>
    </ligand>
</feature>
<feature type="binding site" evidence="13 32">
    <location>
        <position position="29"/>
    </location>
    <ligand>
        <name>Ca(2+)</name>
        <dbReference type="ChEBI" id="CHEBI:29108"/>
    </ligand>
</feature>
<feature type="binding site" evidence="13 32">
    <location>
        <position position="31"/>
    </location>
    <ligand>
        <name>Ca(2+)</name>
        <dbReference type="ChEBI" id="CHEBI:29108"/>
    </ligand>
</feature>
<feature type="binding site" evidence="13 32">
    <location>
        <position position="48"/>
    </location>
    <ligand>
        <name>Ca(2+)</name>
        <dbReference type="ChEBI" id="CHEBI:29108"/>
    </ligand>
</feature>
<feature type="disulfide bond" evidence="2 3 13 30 31 32">
    <location>
        <begin position="26"/>
        <end position="115"/>
    </location>
</feature>
<feature type="disulfide bond" evidence="2 3 13 30 31 32">
    <location>
        <begin position="28"/>
        <end position="44"/>
    </location>
</feature>
<feature type="disulfide bond" evidence="2 3 13 30 31 32">
    <location>
        <begin position="43"/>
        <end position="95"/>
    </location>
</feature>
<feature type="disulfide bond" evidence="2 3 13 30 31 32">
    <location>
        <begin position="49"/>
        <end position="121"/>
    </location>
</feature>
<feature type="disulfide bond" evidence="2 3 13 30 31 32">
    <location>
        <begin position="50"/>
        <end position="88"/>
    </location>
</feature>
<feature type="disulfide bond" evidence="2 3 13 30 31 32">
    <location>
        <begin position="57"/>
        <end position="81"/>
    </location>
</feature>
<feature type="disulfide bond" evidence="2 3 13 30 31 32">
    <location>
        <begin position="75"/>
        <end position="86"/>
    </location>
</feature>
<feature type="helix" evidence="34">
    <location>
        <begin position="2"/>
        <end position="13"/>
    </location>
</feature>
<feature type="helix" evidence="34">
    <location>
        <begin position="17"/>
        <end position="20"/>
    </location>
</feature>
<feature type="strand" evidence="33">
    <location>
        <begin position="22"/>
        <end position="24"/>
    </location>
</feature>
<feature type="turn" evidence="34">
    <location>
        <begin position="25"/>
        <end position="27"/>
    </location>
</feature>
<feature type="strand" evidence="34">
    <location>
        <begin position="28"/>
        <end position="30"/>
    </location>
</feature>
<feature type="strand" evidence="36">
    <location>
        <begin position="32"/>
        <end position="34"/>
    </location>
</feature>
<feature type="helix" evidence="34">
    <location>
        <begin position="39"/>
        <end position="52"/>
    </location>
</feature>
<feature type="strand" evidence="35">
    <location>
        <begin position="55"/>
        <end position="57"/>
    </location>
</feature>
<feature type="turn" evidence="34">
    <location>
        <begin position="59"/>
        <end position="61"/>
    </location>
</feature>
<feature type="strand" evidence="34">
    <location>
        <begin position="66"/>
        <end position="69"/>
    </location>
</feature>
<feature type="strand" evidence="34">
    <location>
        <begin position="72"/>
        <end position="75"/>
    </location>
</feature>
<feature type="helix" evidence="34">
    <location>
        <begin position="80"/>
        <end position="98"/>
    </location>
</feature>
<feature type="helix" evidence="34">
    <location>
        <begin position="99"/>
        <end position="102"/>
    </location>
</feature>
<feature type="helix" evidence="34">
    <location>
        <begin position="105"/>
        <end position="107"/>
    </location>
</feature>
<feature type="helix" evidence="34">
    <location>
        <begin position="112"/>
        <end position="114"/>
    </location>
</feature>
<name>PA2B8_DABRR</name>